<name>SYT_OLEA2</name>
<reference key="1">
    <citation type="journal article" date="2011" name="J. Bacteriol.">
        <title>Complete genome sequence and updated annotation of Desulfovibrio alaskensis G20.</title>
        <authorList>
            <person name="Hauser L.J."/>
            <person name="Land M.L."/>
            <person name="Brown S.D."/>
            <person name="Larimer F."/>
            <person name="Keller K.L."/>
            <person name="Rapp-Giles B.J."/>
            <person name="Price M.N."/>
            <person name="Lin M."/>
            <person name="Bruce D.C."/>
            <person name="Detter J.C."/>
            <person name="Tapia R."/>
            <person name="Han C.S."/>
            <person name="Goodwin L.A."/>
            <person name="Cheng J.F."/>
            <person name="Pitluck S."/>
            <person name="Copeland A."/>
            <person name="Lucas S."/>
            <person name="Nolan M."/>
            <person name="Lapidus A.L."/>
            <person name="Palumbo A.V."/>
            <person name="Wall J.D."/>
        </authorList>
    </citation>
    <scope>NUCLEOTIDE SEQUENCE [LARGE SCALE GENOMIC DNA]</scope>
    <source>
        <strain>ATCC BAA-1058 / DSM 17464 / G20</strain>
    </source>
</reference>
<feature type="chain" id="PRO_1000058421" description="Threonine--tRNA ligase">
    <location>
        <begin position="1"/>
        <end position="644"/>
    </location>
</feature>
<feature type="domain" description="TGS" evidence="2">
    <location>
        <begin position="1"/>
        <end position="61"/>
    </location>
</feature>
<feature type="region of interest" description="Catalytic" evidence="1">
    <location>
        <begin position="241"/>
        <end position="532"/>
    </location>
</feature>
<feature type="binding site" evidence="1">
    <location>
        <position position="333"/>
    </location>
    <ligand>
        <name>Zn(2+)</name>
        <dbReference type="ChEBI" id="CHEBI:29105"/>
    </ligand>
</feature>
<feature type="binding site" evidence="1">
    <location>
        <position position="384"/>
    </location>
    <ligand>
        <name>Zn(2+)</name>
        <dbReference type="ChEBI" id="CHEBI:29105"/>
    </ligand>
</feature>
<feature type="binding site" evidence="1">
    <location>
        <position position="509"/>
    </location>
    <ligand>
        <name>Zn(2+)</name>
        <dbReference type="ChEBI" id="CHEBI:29105"/>
    </ligand>
</feature>
<organism>
    <name type="scientific">Oleidesulfovibrio alaskensis (strain ATCC BAA-1058 / DSM 17464 / G20)</name>
    <name type="common">Desulfovibrio alaskensis</name>
    <dbReference type="NCBI Taxonomy" id="207559"/>
    <lineage>
        <taxon>Bacteria</taxon>
        <taxon>Pseudomonadati</taxon>
        <taxon>Thermodesulfobacteriota</taxon>
        <taxon>Desulfovibrionia</taxon>
        <taxon>Desulfovibrionales</taxon>
        <taxon>Desulfovibrionaceae</taxon>
        <taxon>Oleidesulfovibrio</taxon>
    </lineage>
</organism>
<keyword id="KW-0030">Aminoacyl-tRNA synthetase</keyword>
<keyword id="KW-0067">ATP-binding</keyword>
<keyword id="KW-0963">Cytoplasm</keyword>
<keyword id="KW-0436">Ligase</keyword>
<keyword id="KW-0479">Metal-binding</keyword>
<keyword id="KW-0547">Nucleotide-binding</keyword>
<keyword id="KW-0648">Protein biosynthesis</keyword>
<keyword id="KW-1185">Reference proteome</keyword>
<keyword id="KW-0694">RNA-binding</keyword>
<keyword id="KW-0820">tRNA-binding</keyword>
<keyword id="KW-0862">Zinc</keyword>
<accession>Q30Y11</accession>
<evidence type="ECO:0000255" key="1">
    <source>
        <dbReference type="HAMAP-Rule" id="MF_00184"/>
    </source>
</evidence>
<evidence type="ECO:0000255" key="2">
    <source>
        <dbReference type="PROSITE-ProRule" id="PRU01228"/>
    </source>
</evidence>
<comment type="function">
    <text evidence="1">Catalyzes the attachment of threonine to tRNA(Thr) in a two-step reaction: L-threonine is first activated by ATP to form Thr-AMP and then transferred to the acceptor end of tRNA(Thr). Also edits incorrectly charged L-seryl-tRNA(Thr).</text>
</comment>
<comment type="catalytic activity">
    <reaction evidence="1">
        <text>tRNA(Thr) + L-threonine + ATP = L-threonyl-tRNA(Thr) + AMP + diphosphate + H(+)</text>
        <dbReference type="Rhea" id="RHEA:24624"/>
        <dbReference type="Rhea" id="RHEA-COMP:9670"/>
        <dbReference type="Rhea" id="RHEA-COMP:9704"/>
        <dbReference type="ChEBI" id="CHEBI:15378"/>
        <dbReference type="ChEBI" id="CHEBI:30616"/>
        <dbReference type="ChEBI" id="CHEBI:33019"/>
        <dbReference type="ChEBI" id="CHEBI:57926"/>
        <dbReference type="ChEBI" id="CHEBI:78442"/>
        <dbReference type="ChEBI" id="CHEBI:78534"/>
        <dbReference type="ChEBI" id="CHEBI:456215"/>
        <dbReference type="EC" id="6.1.1.3"/>
    </reaction>
</comment>
<comment type="cofactor">
    <cofactor evidence="1">
        <name>Zn(2+)</name>
        <dbReference type="ChEBI" id="CHEBI:29105"/>
    </cofactor>
    <text evidence="1">Binds 1 zinc ion per subunit.</text>
</comment>
<comment type="subunit">
    <text evidence="1">Homodimer.</text>
</comment>
<comment type="subcellular location">
    <subcellularLocation>
        <location evidence="1">Cytoplasm</location>
    </subcellularLocation>
</comment>
<comment type="similarity">
    <text evidence="1">Belongs to the class-II aminoacyl-tRNA synthetase family.</text>
</comment>
<gene>
    <name evidence="1" type="primary">thrS</name>
    <name type="ordered locus">Dde_2639</name>
</gene>
<protein>
    <recommendedName>
        <fullName evidence="1">Threonine--tRNA ligase</fullName>
        <ecNumber evidence="1">6.1.1.3</ecNumber>
    </recommendedName>
    <alternativeName>
        <fullName evidence="1">Threonyl-tRNA synthetase</fullName>
        <shortName evidence="1">ThrRS</shortName>
    </alternativeName>
</protein>
<dbReference type="EC" id="6.1.1.3" evidence="1"/>
<dbReference type="EMBL" id="CP000112">
    <property type="protein sequence ID" value="ABB39435.1"/>
    <property type="molecule type" value="Genomic_DNA"/>
</dbReference>
<dbReference type="RefSeq" id="WP_011368471.1">
    <property type="nucleotide sequence ID" value="NC_007519.1"/>
</dbReference>
<dbReference type="SMR" id="Q30Y11"/>
<dbReference type="STRING" id="207559.Dde_2639"/>
<dbReference type="KEGG" id="dde:Dde_2639"/>
<dbReference type="eggNOG" id="COG0441">
    <property type="taxonomic scope" value="Bacteria"/>
</dbReference>
<dbReference type="HOGENOM" id="CLU_008554_0_1_7"/>
<dbReference type="Proteomes" id="UP000002710">
    <property type="component" value="Chromosome"/>
</dbReference>
<dbReference type="GO" id="GO:0005829">
    <property type="term" value="C:cytosol"/>
    <property type="evidence" value="ECO:0007669"/>
    <property type="project" value="TreeGrafter"/>
</dbReference>
<dbReference type="GO" id="GO:0005524">
    <property type="term" value="F:ATP binding"/>
    <property type="evidence" value="ECO:0007669"/>
    <property type="project" value="UniProtKB-UniRule"/>
</dbReference>
<dbReference type="GO" id="GO:0046872">
    <property type="term" value="F:metal ion binding"/>
    <property type="evidence" value="ECO:0007669"/>
    <property type="project" value="UniProtKB-KW"/>
</dbReference>
<dbReference type="GO" id="GO:0004829">
    <property type="term" value="F:threonine-tRNA ligase activity"/>
    <property type="evidence" value="ECO:0007669"/>
    <property type="project" value="UniProtKB-UniRule"/>
</dbReference>
<dbReference type="GO" id="GO:0000049">
    <property type="term" value="F:tRNA binding"/>
    <property type="evidence" value="ECO:0007669"/>
    <property type="project" value="UniProtKB-KW"/>
</dbReference>
<dbReference type="GO" id="GO:0006435">
    <property type="term" value="P:threonyl-tRNA aminoacylation"/>
    <property type="evidence" value="ECO:0007669"/>
    <property type="project" value="UniProtKB-UniRule"/>
</dbReference>
<dbReference type="CDD" id="cd00860">
    <property type="entry name" value="ThrRS_anticodon"/>
    <property type="match status" value="1"/>
</dbReference>
<dbReference type="CDD" id="cd00771">
    <property type="entry name" value="ThrRS_core"/>
    <property type="match status" value="1"/>
</dbReference>
<dbReference type="FunFam" id="3.30.54.20:FF:000002">
    <property type="entry name" value="Threonine--tRNA ligase"/>
    <property type="match status" value="1"/>
</dbReference>
<dbReference type="FunFam" id="3.30.930.10:FF:000002">
    <property type="entry name" value="Threonine--tRNA ligase"/>
    <property type="match status" value="1"/>
</dbReference>
<dbReference type="FunFam" id="3.40.50.800:FF:000001">
    <property type="entry name" value="Threonine--tRNA ligase"/>
    <property type="match status" value="1"/>
</dbReference>
<dbReference type="FunFam" id="3.30.980.10:FF:000005">
    <property type="entry name" value="Threonyl-tRNA synthetase, mitochondrial"/>
    <property type="match status" value="1"/>
</dbReference>
<dbReference type="Gene3D" id="3.30.54.20">
    <property type="match status" value="1"/>
</dbReference>
<dbReference type="Gene3D" id="3.40.50.800">
    <property type="entry name" value="Anticodon-binding domain"/>
    <property type="match status" value="1"/>
</dbReference>
<dbReference type="Gene3D" id="3.30.930.10">
    <property type="entry name" value="Bira Bifunctional Protein, Domain 2"/>
    <property type="match status" value="1"/>
</dbReference>
<dbReference type="Gene3D" id="3.30.980.10">
    <property type="entry name" value="Threonyl-trna Synthetase, Chain A, domain 2"/>
    <property type="match status" value="1"/>
</dbReference>
<dbReference type="HAMAP" id="MF_00184">
    <property type="entry name" value="Thr_tRNA_synth"/>
    <property type="match status" value="1"/>
</dbReference>
<dbReference type="InterPro" id="IPR002314">
    <property type="entry name" value="aa-tRNA-synt_IIb"/>
</dbReference>
<dbReference type="InterPro" id="IPR006195">
    <property type="entry name" value="aa-tRNA-synth_II"/>
</dbReference>
<dbReference type="InterPro" id="IPR045864">
    <property type="entry name" value="aa-tRNA-synth_II/BPL/LPL"/>
</dbReference>
<dbReference type="InterPro" id="IPR004154">
    <property type="entry name" value="Anticodon-bd"/>
</dbReference>
<dbReference type="InterPro" id="IPR036621">
    <property type="entry name" value="Anticodon-bd_dom_sf"/>
</dbReference>
<dbReference type="InterPro" id="IPR004095">
    <property type="entry name" value="TGS"/>
</dbReference>
<dbReference type="InterPro" id="IPR002320">
    <property type="entry name" value="Thr-tRNA-ligase_IIa"/>
</dbReference>
<dbReference type="InterPro" id="IPR018163">
    <property type="entry name" value="Thr/Ala-tRNA-synth_IIc_edit"/>
</dbReference>
<dbReference type="InterPro" id="IPR047246">
    <property type="entry name" value="ThrRS_anticodon"/>
</dbReference>
<dbReference type="InterPro" id="IPR033728">
    <property type="entry name" value="ThrRS_core"/>
</dbReference>
<dbReference type="InterPro" id="IPR012947">
    <property type="entry name" value="tRNA_SAD"/>
</dbReference>
<dbReference type="NCBIfam" id="TIGR00418">
    <property type="entry name" value="thrS"/>
    <property type="match status" value="1"/>
</dbReference>
<dbReference type="PANTHER" id="PTHR11451:SF44">
    <property type="entry name" value="THREONINE--TRNA LIGASE, CHLOROPLASTIC_MITOCHONDRIAL 2"/>
    <property type="match status" value="1"/>
</dbReference>
<dbReference type="PANTHER" id="PTHR11451">
    <property type="entry name" value="THREONINE-TRNA LIGASE"/>
    <property type="match status" value="1"/>
</dbReference>
<dbReference type="Pfam" id="PF03129">
    <property type="entry name" value="HGTP_anticodon"/>
    <property type="match status" value="1"/>
</dbReference>
<dbReference type="Pfam" id="PF00587">
    <property type="entry name" value="tRNA-synt_2b"/>
    <property type="match status" value="1"/>
</dbReference>
<dbReference type="Pfam" id="PF07973">
    <property type="entry name" value="tRNA_SAD"/>
    <property type="match status" value="1"/>
</dbReference>
<dbReference type="PRINTS" id="PR01047">
    <property type="entry name" value="TRNASYNTHTHR"/>
</dbReference>
<dbReference type="SMART" id="SM00863">
    <property type="entry name" value="tRNA_SAD"/>
    <property type="match status" value="1"/>
</dbReference>
<dbReference type="SUPFAM" id="SSF52954">
    <property type="entry name" value="Class II aaRS ABD-related"/>
    <property type="match status" value="1"/>
</dbReference>
<dbReference type="SUPFAM" id="SSF55681">
    <property type="entry name" value="Class II aaRS and biotin synthetases"/>
    <property type="match status" value="1"/>
</dbReference>
<dbReference type="SUPFAM" id="SSF55186">
    <property type="entry name" value="ThrRS/AlaRS common domain"/>
    <property type="match status" value="1"/>
</dbReference>
<dbReference type="PROSITE" id="PS50862">
    <property type="entry name" value="AA_TRNA_LIGASE_II"/>
    <property type="match status" value="1"/>
</dbReference>
<dbReference type="PROSITE" id="PS51880">
    <property type="entry name" value="TGS"/>
    <property type="match status" value="1"/>
</dbReference>
<proteinExistence type="inferred from homology"/>
<sequence>MKVSIEGSVVEVESGASCRDVLKQALSGKKFKKVLAARCGGTMLDLTATVPTACETLEPVYADSPEGLGLIRHSAAHVMADAVQRLFPGVKVTIGPAIENGFYYDFDYERPFTADDLEAIEAEMDKIIKAAHPFERSVMSKDEAKKMFADMGETYKLELIDAVPDDIVSIYRSGDFVDLCRGPHIPDTGCINAFKLMSVAGAYWRGDEKNAMLSRVYGTAFPDEKELKSYLNRIEEAKKRDHRKLGTQLDLFSFQEEGGSGMVYWHPKGALVRAILEDFERKEHLKRGYQIVQTPQILRRELWEKSGHYDNYRENMYFTDIDEQPYGVKPMNCVAHMLIYKSRSHSYRDLPVRLFELGVVHRHEKSGVLHGLLRVRQFTQDDAHIICTPDQLESEIVGVLNFVRDVMGVFGFEYSMEVSTRPEKSIGSDEDWDRATSALVKALEGQGLPYEINEGDGAFYGPKIDVKLRDCLGREWQCATVQCDFTLPDRFDLVYIGQDGERHRPVMVHRVILGSVERFIGVLTEHFAGAFPTWLAPVQARLLTVTDAQNEFAEEARAALMAQGIRVEVDTRNEKLGYKVREAQLEKIPYILVIGDKEVEARGVNVRLRKGDNLGLKTLDEVVDIIRADCEEPFKSGGMRYSFS</sequence>